<protein>
    <recommendedName>
        <fullName evidence="1">Cell division protein SepF</fullName>
    </recommendedName>
</protein>
<evidence type="ECO:0000255" key="1">
    <source>
        <dbReference type="HAMAP-Rule" id="MF_01197"/>
    </source>
</evidence>
<evidence type="ECO:0000256" key="2">
    <source>
        <dbReference type="SAM" id="MobiDB-lite"/>
    </source>
</evidence>
<accession>A0RHS0</accession>
<sequence>MSWSKVKYFFFDTPEEKEAAQYSYEKEQTDMKKQQDPPEQQDVTFPKAQPKQNVVSIETAKQSSKVVLLEPRTYSEAQGIADHLKGRRAVVINLQRMSTDQAVRIVDFLSGTVYAIGGDIQKIGPKTFMCTPENVDIVGAISELFGEEEDTNIKRW</sequence>
<dbReference type="EMBL" id="CP000485">
    <property type="protein sequence ID" value="ABK86763.1"/>
    <property type="molecule type" value="Genomic_DNA"/>
</dbReference>
<dbReference type="RefSeq" id="WP_000119136.1">
    <property type="nucleotide sequence ID" value="NC_008600.1"/>
</dbReference>
<dbReference type="SMR" id="A0RHS0"/>
<dbReference type="KEGG" id="btl:BALH_3529"/>
<dbReference type="HOGENOM" id="CLU_078499_4_1_9"/>
<dbReference type="GO" id="GO:0005737">
    <property type="term" value="C:cytoplasm"/>
    <property type="evidence" value="ECO:0007669"/>
    <property type="project" value="UniProtKB-SubCell"/>
</dbReference>
<dbReference type="GO" id="GO:0000917">
    <property type="term" value="P:division septum assembly"/>
    <property type="evidence" value="ECO:0007669"/>
    <property type="project" value="UniProtKB-KW"/>
</dbReference>
<dbReference type="GO" id="GO:0043093">
    <property type="term" value="P:FtsZ-dependent cytokinesis"/>
    <property type="evidence" value="ECO:0007669"/>
    <property type="project" value="UniProtKB-UniRule"/>
</dbReference>
<dbReference type="Gene3D" id="3.30.110.150">
    <property type="entry name" value="SepF-like protein"/>
    <property type="match status" value="1"/>
</dbReference>
<dbReference type="HAMAP" id="MF_01197">
    <property type="entry name" value="SepF"/>
    <property type="match status" value="1"/>
</dbReference>
<dbReference type="InterPro" id="IPR023052">
    <property type="entry name" value="Cell_div_SepF"/>
</dbReference>
<dbReference type="InterPro" id="IPR007561">
    <property type="entry name" value="Cell_div_SepF/SepF-rel"/>
</dbReference>
<dbReference type="InterPro" id="IPR038594">
    <property type="entry name" value="SepF-like_sf"/>
</dbReference>
<dbReference type="PANTHER" id="PTHR35798">
    <property type="entry name" value="CELL DIVISION PROTEIN SEPF"/>
    <property type="match status" value="1"/>
</dbReference>
<dbReference type="PANTHER" id="PTHR35798:SF1">
    <property type="entry name" value="CELL DIVISION PROTEIN SEPF"/>
    <property type="match status" value="1"/>
</dbReference>
<dbReference type="Pfam" id="PF04472">
    <property type="entry name" value="SepF"/>
    <property type="match status" value="1"/>
</dbReference>
<comment type="function">
    <text evidence="1">Cell division protein that is part of the divisome complex and is recruited early to the Z-ring. Probably stimulates Z-ring formation, perhaps through the cross-linking of FtsZ protofilaments. Its function overlaps with FtsA.</text>
</comment>
<comment type="subunit">
    <text evidence="1">Homodimer. Interacts with FtsZ.</text>
</comment>
<comment type="subcellular location">
    <subcellularLocation>
        <location evidence="1">Cytoplasm</location>
    </subcellularLocation>
    <text evidence="1">Localizes to the division site, in a FtsZ-dependent manner.</text>
</comment>
<comment type="similarity">
    <text evidence="1">Belongs to the SepF family.</text>
</comment>
<gene>
    <name evidence="1" type="primary">sepF</name>
    <name type="ordered locus">BALH_3529</name>
</gene>
<feature type="chain" id="PRO_0000333985" description="Cell division protein SepF">
    <location>
        <begin position="1"/>
        <end position="156"/>
    </location>
</feature>
<feature type="region of interest" description="Disordered" evidence="2">
    <location>
        <begin position="23"/>
        <end position="50"/>
    </location>
</feature>
<feature type="compositionally biased region" description="Basic and acidic residues" evidence="2">
    <location>
        <begin position="23"/>
        <end position="36"/>
    </location>
</feature>
<proteinExistence type="inferred from homology"/>
<organism>
    <name type="scientific">Bacillus thuringiensis (strain Al Hakam)</name>
    <dbReference type="NCBI Taxonomy" id="412694"/>
    <lineage>
        <taxon>Bacteria</taxon>
        <taxon>Bacillati</taxon>
        <taxon>Bacillota</taxon>
        <taxon>Bacilli</taxon>
        <taxon>Bacillales</taxon>
        <taxon>Bacillaceae</taxon>
        <taxon>Bacillus</taxon>
        <taxon>Bacillus cereus group</taxon>
    </lineage>
</organism>
<name>SEPF_BACAH</name>
<keyword id="KW-0131">Cell cycle</keyword>
<keyword id="KW-0132">Cell division</keyword>
<keyword id="KW-0963">Cytoplasm</keyword>
<keyword id="KW-0717">Septation</keyword>
<reference key="1">
    <citation type="journal article" date="2007" name="J. Bacteriol.">
        <title>The complete genome sequence of Bacillus thuringiensis Al Hakam.</title>
        <authorList>
            <person name="Challacombe J.F."/>
            <person name="Altherr M.R."/>
            <person name="Xie G."/>
            <person name="Bhotika S.S."/>
            <person name="Brown N."/>
            <person name="Bruce D."/>
            <person name="Campbell C.S."/>
            <person name="Campbell M.L."/>
            <person name="Chen J."/>
            <person name="Chertkov O."/>
            <person name="Cleland C."/>
            <person name="Dimitrijevic M."/>
            <person name="Doggett N.A."/>
            <person name="Fawcett J.J."/>
            <person name="Glavina T."/>
            <person name="Goodwin L.A."/>
            <person name="Green L.D."/>
            <person name="Han C.S."/>
            <person name="Hill K.K."/>
            <person name="Hitchcock P."/>
            <person name="Jackson P.J."/>
            <person name="Keim P."/>
            <person name="Kewalramani A.R."/>
            <person name="Longmire J."/>
            <person name="Lucas S."/>
            <person name="Malfatti S."/>
            <person name="Martinez D."/>
            <person name="McMurry K."/>
            <person name="Meincke L.J."/>
            <person name="Misra M."/>
            <person name="Moseman B.L."/>
            <person name="Mundt M."/>
            <person name="Munk A.C."/>
            <person name="Okinaka R.T."/>
            <person name="Parson-Quintana B."/>
            <person name="Reilly L.P."/>
            <person name="Richardson P."/>
            <person name="Robinson D.L."/>
            <person name="Saunders E."/>
            <person name="Tapia R."/>
            <person name="Tesmer J.G."/>
            <person name="Thayer N."/>
            <person name="Thompson L.S."/>
            <person name="Tice H."/>
            <person name="Ticknor L.O."/>
            <person name="Wills P.L."/>
            <person name="Gilna P."/>
            <person name="Brettin T.S."/>
        </authorList>
    </citation>
    <scope>NUCLEOTIDE SEQUENCE [LARGE SCALE GENOMIC DNA]</scope>
    <source>
        <strain>Al Hakam</strain>
    </source>
</reference>